<accession>Q9CM16</accession>
<feature type="chain" id="PRO_0000165838" description="Peptidase B">
    <location>
        <begin position="1"/>
        <end position="434"/>
    </location>
</feature>
<feature type="active site" evidence="1">
    <location>
        <position position="210"/>
    </location>
</feature>
<feature type="active site" evidence="1">
    <location>
        <position position="284"/>
    </location>
</feature>
<feature type="binding site" evidence="1">
    <location>
        <position position="198"/>
    </location>
    <ligand>
        <name>Mn(2+)</name>
        <dbReference type="ChEBI" id="CHEBI:29035"/>
        <label>2</label>
    </ligand>
</feature>
<feature type="binding site" evidence="1">
    <location>
        <position position="203"/>
    </location>
    <ligand>
        <name>Mn(2+)</name>
        <dbReference type="ChEBI" id="CHEBI:29035"/>
        <label>1</label>
    </ligand>
</feature>
<feature type="binding site" evidence="1">
    <location>
        <position position="203"/>
    </location>
    <ligand>
        <name>Mn(2+)</name>
        <dbReference type="ChEBI" id="CHEBI:29035"/>
        <label>2</label>
    </ligand>
</feature>
<feature type="binding site" evidence="1">
    <location>
        <position position="221"/>
    </location>
    <ligand>
        <name>Mn(2+)</name>
        <dbReference type="ChEBI" id="CHEBI:29035"/>
        <label>2</label>
    </ligand>
</feature>
<feature type="binding site" evidence="1">
    <location>
        <position position="280"/>
    </location>
    <ligand>
        <name>Mn(2+)</name>
        <dbReference type="ChEBI" id="CHEBI:29035"/>
        <label>1</label>
    </ligand>
</feature>
<feature type="binding site" evidence="1">
    <location>
        <position position="282"/>
    </location>
    <ligand>
        <name>Mn(2+)</name>
        <dbReference type="ChEBI" id="CHEBI:29035"/>
        <label>1</label>
    </ligand>
</feature>
<feature type="binding site" evidence="1">
    <location>
        <position position="282"/>
    </location>
    <ligand>
        <name>Mn(2+)</name>
        <dbReference type="ChEBI" id="CHEBI:29035"/>
        <label>2</label>
    </ligand>
</feature>
<reference key="1">
    <citation type="journal article" date="2001" name="Proc. Natl. Acad. Sci. U.S.A.">
        <title>Complete genomic sequence of Pasteurella multocida Pm70.</title>
        <authorList>
            <person name="May B.J."/>
            <person name="Zhang Q."/>
            <person name="Li L.L."/>
            <person name="Paustian M.L."/>
            <person name="Whittam T.S."/>
            <person name="Kapur V."/>
        </authorList>
    </citation>
    <scope>NUCLEOTIDE SEQUENCE [LARGE SCALE GENOMIC DNA]</scope>
    <source>
        <strain>Pm70</strain>
    </source>
</reference>
<gene>
    <name evidence="1" type="primary">pepB</name>
    <name type="ordered locus">PM1029</name>
</gene>
<sequence length="434" mass="46877">MPMQIMLSTQVADEAWGKNALLSFHQAQATIHVTDYSARNTVQKAARKLRGQGIKDVVLAGENWDLETCWAFYQGFYSAKQDYAVEFPTLDDAPQAELLARIQCGDFVREMINLPAEVITPVELARRAAHFIEEQAEEYGDKSAVSFNIISGEELKAQNYQGIWNVGRGSANPPAMLQLDFNPTGNPDAPVLACLVGKGITFDSGGYSIKPSDNMSTMRTDMGGAALLTGSLGLAIARGLTQRVKLYLCCAENLVSSNAFKLGDIITYSNGVTAEILNTDAEGRLVLADGLIEADKQQPKMIIDCATLTGAAKMAVGNDYHSVLSMDDALVAALFKSAETEQEPFWRLPFAELHRSQISTAFADIANTGTVPVGAGASTATAFLSYFVKNYQQHWLHIDCSATYRKTASDLWAVGATGIGVQTLANLLLNPVKG</sequence>
<proteinExistence type="inferred from homology"/>
<dbReference type="EC" id="3.4.11.23" evidence="1"/>
<dbReference type="EMBL" id="AE004439">
    <property type="protein sequence ID" value="AAK03113.1"/>
    <property type="molecule type" value="Genomic_DNA"/>
</dbReference>
<dbReference type="SMR" id="Q9CM16"/>
<dbReference type="STRING" id="272843.PM1029"/>
<dbReference type="MEROPS" id="M17.004"/>
<dbReference type="EnsemblBacteria" id="AAK03113">
    <property type="protein sequence ID" value="AAK03113"/>
    <property type="gene ID" value="PM1029"/>
</dbReference>
<dbReference type="KEGG" id="pmu:PM1029"/>
<dbReference type="PATRIC" id="fig|272843.6.peg.1042"/>
<dbReference type="HOGENOM" id="CLU_013734_7_1_6"/>
<dbReference type="Proteomes" id="UP000000809">
    <property type="component" value="Chromosome"/>
</dbReference>
<dbReference type="GO" id="GO:0005737">
    <property type="term" value="C:cytoplasm"/>
    <property type="evidence" value="ECO:0007669"/>
    <property type="project" value="UniProtKB-SubCell"/>
</dbReference>
<dbReference type="GO" id="GO:0030145">
    <property type="term" value="F:manganese ion binding"/>
    <property type="evidence" value="ECO:0007669"/>
    <property type="project" value="UniProtKB-UniRule"/>
</dbReference>
<dbReference type="GO" id="GO:0070006">
    <property type="term" value="F:metalloaminopeptidase activity"/>
    <property type="evidence" value="ECO:0007669"/>
    <property type="project" value="InterPro"/>
</dbReference>
<dbReference type="GO" id="GO:0006508">
    <property type="term" value="P:proteolysis"/>
    <property type="evidence" value="ECO:0007669"/>
    <property type="project" value="UniProtKB-UniRule"/>
</dbReference>
<dbReference type="CDD" id="cd00433">
    <property type="entry name" value="Peptidase_M17"/>
    <property type="match status" value="1"/>
</dbReference>
<dbReference type="Gene3D" id="3.40.630.10">
    <property type="entry name" value="Zn peptidases"/>
    <property type="match status" value="1"/>
</dbReference>
<dbReference type="HAMAP" id="MF_00504">
    <property type="entry name" value="Aminopeptidase_M17"/>
    <property type="match status" value="1"/>
</dbReference>
<dbReference type="InterPro" id="IPR011356">
    <property type="entry name" value="Leucine_aapep/pepB"/>
</dbReference>
<dbReference type="InterPro" id="IPR047620">
    <property type="entry name" value="M17_PepB-like_N"/>
</dbReference>
<dbReference type="InterPro" id="IPR008330">
    <property type="entry name" value="Pept_M17_PepB"/>
</dbReference>
<dbReference type="InterPro" id="IPR000819">
    <property type="entry name" value="Peptidase_M17_C"/>
</dbReference>
<dbReference type="NCBIfam" id="NF003450">
    <property type="entry name" value="PRK05015.1"/>
    <property type="match status" value="1"/>
</dbReference>
<dbReference type="PANTHER" id="PTHR11963">
    <property type="entry name" value="LEUCINE AMINOPEPTIDASE-RELATED"/>
    <property type="match status" value="1"/>
</dbReference>
<dbReference type="PANTHER" id="PTHR11963:SF20">
    <property type="entry name" value="PEPTIDASE B"/>
    <property type="match status" value="1"/>
</dbReference>
<dbReference type="Pfam" id="PF12404">
    <property type="entry name" value="DUF3663"/>
    <property type="match status" value="1"/>
</dbReference>
<dbReference type="Pfam" id="PF00883">
    <property type="entry name" value="Peptidase_M17"/>
    <property type="match status" value="1"/>
</dbReference>
<dbReference type="PIRSF" id="PIRSF036388">
    <property type="entry name" value="Ctsl_amnpptdse_B"/>
    <property type="match status" value="1"/>
</dbReference>
<dbReference type="PRINTS" id="PR00481">
    <property type="entry name" value="LAMNOPPTDASE"/>
</dbReference>
<dbReference type="SUPFAM" id="SSF53187">
    <property type="entry name" value="Zn-dependent exopeptidases"/>
    <property type="match status" value="1"/>
</dbReference>
<dbReference type="PROSITE" id="PS00631">
    <property type="entry name" value="CYTOSOL_AP"/>
    <property type="match status" value="1"/>
</dbReference>
<keyword id="KW-0031">Aminopeptidase</keyword>
<keyword id="KW-0963">Cytoplasm</keyword>
<keyword id="KW-0378">Hydrolase</keyword>
<keyword id="KW-0464">Manganese</keyword>
<keyword id="KW-0479">Metal-binding</keyword>
<keyword id="KW-0645">Protease</keyword>
<keyword id="KW-1185">Reference proteome</keyword>
<organism>
    <name type="scientific">Pasteurella multocida (strain Pm70)</name>
    <dbReference type="NCBI Taxonomy" id="272843"/>
    <lineage>
        <taxon>Bacteria</taxon>
        <taxon>Pseudomonadati</taxon>
        <taxon>Pseudomonadota</taxon>
        <taxon>Gammaproteobacteria</taxon>
        <taxon>Pasteurellales</taxon>
        <taxon>Pasteurellaceae</taxon>
        <taxon>Pasteurella</taxon>
    </lineage>
</organism>
<protein>
    <recommendedName>
        <fullName evidence="1">Peptidase B</fullName>
        <ecNumber evidence="1">3.4.11.23</ecNumber>
    </recommendedName>
    <alternativeName>
        <fullName evidence="1">Aminopeptidase B</fullName>
    </alternativeName>
</protein>
<comment type="function">
    <text evidence="1">Probably plays an important role in intracellular peptide degradation.</text>
</comment>
<comment type="catalytic activity">
    <reaction evidence="1">
        <text>Release of an N-terminal amino acid, Xaa, from a peptide or arylamide. Xaa is preferably Glu or Asp but may be other amino acids, including Leu, Met, His, Cys and Gln.</text>
        <dbReference type="EC" id="3.4.11.23"/>
    </reaction>
</comment>
<comment type="cofactor">
    <cofactor evidence="1">
        <name>Mn(2+)</name>
        <dbReference type="ChEBI" id="CHEBI:29035"/>
    </cofactor>
    <text evidence="1">Binds 2 manganese ions per subunit.</text>
</comment>
<comment type="subunit">
    <text evidence="1">Homohexamer.</text>
</comment>
<comment type="subcellular location">
    <subcellularLocation>
        <location evidence="1">Cytoplasm</location>
    </subcellularLocation>
</comment>
<comment type="similarity">
    <text evidence="1">Belongs to the peptidase M17 family.</text>
</comment>
<name>PEPB_PASMU</name>
<evidence type="ECO:0000255" key="1">
    <source>
        <dbReference type="HAMAP-Rule" id="MF_00504"/>
    </source>
</evidence>